<comment type="function">
    <text evidence="1 2">Part of the dynactin complex that activates the molecular motor dynein for ultra-processive transport along microtubules (By similarity). Plays a key role in dynein-mediated retrograde transport of vesicles and organelles along microtubules by recruiting and tethering dynein to microtubules. Binds to both dynein and microtubules providing a link between specific cargos, microtubules and dynein. Essential for targeting dynein to microtubule plus ends, recruiting dynein to membranous cargos and enhancing dynein processivity (the ability to move along a microtubule for a long distance without falling off the track). Can also act as a brake to slow the dynein motor during motility along the microtubule. Can regulate microtubule stability by promoting microtubule formation, nucleation and polymerization and by inhibiting microtubule catastrophe in neurons. Inhibits microtubule catastrophe by binding both to microtubules and to tubulin, leading to enhanced microtubule stability along the axon. Plays a role in metaphase spindle orientation. Plays a role in centriole cohesion and subdistal appendage organization and function. Its recruitment to the centriole in a KIF3A-dependent manner is essential for the maintenance of centriole cohesion and the formation of subdistal appendage. Also required for microtubule anchoring at the mother centriole. Plays a role in primary cilia formation (By similarity).</text>
</comment>
<comment type="subunit">
    <text evidence="1 2">Monomer and homodimer (By similarity). Subunit of dynactin, a multiprotein complex part of a tripartite complex with dynein and a adapter, such as BICDL1, BICD2 or HOOK3. The dynactin complex is built around ACTR1A/ACTB filament and consists of an actin-related filament composed of a shoulder domain, a pointed end and a barbed end. Its length is defined by its flexible shoulder domain. The soulder is composed of 2 DCTN1 subunits, 4 DCTN2 and 2 DCTN3. DCTN1/p150(glued) binds directly to microtubules and to cytoplasmic dynein (By similarity).</text>
</comment>
<comment type="subcellular location">
    <subcellularLocation>
        <location evidence="2">Cytoplasm</location>
    </subcellularLocation>
    <subcellularLocation>
        <location evidence="2">Cytoplasm</location>
        <location evidence="2">Cytoskeleton</location>
    </subcellularLocation>
</comment>
<comment type="similarity">
    <text evidence="8">Belongs to the dynactin 150 kDa subunit family.</text>
</comment>
<comment type="sequence caution" evidence="8">
    <conflict type="frameshift">
        <sequence resource="EMBL" id="J02932"/>
    </conflict>
</comment>
<reference key="1">
    <citation type="journal article" date="1987" name="Proc. Natl. Acad. Sci. U.S.A.">
        <title>Sequence analysis of the complete cDNA and encoded polypeptide for the Glued gene of Drosophila melanogaster.</title>
        <authorList>
            <person name="Swaroop A."/>
            <person name="Swaroop M."/>
            <person name="Garen A."/>
        </authorList>
    </citation>
    <scope>NUCLEOTIDE SEQUENCE [MRNA]</scope>
    <source>
        <strain>Canton-S</strain>
        <strain>Oregon-R</strain>
    </source>
</reference>
<reference key="2">
    <citation type="journal article" date="2000" name="Science">
        <title>The genome sequence of Drosophila melanogaster.</title>
        <authorList>
            <person name="Adams M.D."/>
            <person name="Celniker S.E."/>
            <person name="Holt R.A."/>
            <person name="Evans C.A."/>
            <person name="Gocayne J.D."/>
            <person name="Amanatides P.G."/>
            <person name="Scherer S.E."/>
            <person name="Li P.W."/>
            <person name="Hoskins R.A."/>
            <person name="Galle R.F."/>
            <person name="George R.A."/>
            <person name="Lewis S.E."/>
            <person name="Richards S."/>
            <person name="Ashburner M."/>
            <person name="Henderson S.N."/>
            <person name="Sutton G.G."/>
            <person name="Wortman J.R."/>
            <person name="Yandell M.D."/>
            <person name="Zhang Q."/>
            <person name="Chen L.X."/>
            <person name="Brandon R.C."/>
            <person name="Rogers Y.-H.C."/>
            <person name="Blazej R.G."/>
            <person name="Champe M."/>
            <person name="Pfeiffer B.D."/>
            <person name="Wan K.H."/>
            <person name="Doyle C."/>
            <person name="Baxter E.G."/>
            <person name="Helt G."/>
            <person name="Nelson C.R."/>
            <person name="Miklos G.L.G."/>
            <person name="Abril J.F."/>
            <person name="Agbayani A."/>
            <person name="An H.-J."/>
            <person name="Andrews-Pfannkoch C."/>
            <person name="Baldwin D."/>
            <person name="Ballew R.M."/>
            <person name="Basu A."/>
            <person name="Baxendale J."/>
            <person name="Bayraktaroglu L."/>
            <person name="Beasley E.M."/>
            <person name="Beeson K.Y."/>
            <person name="Benos P.V."/>
            <person name="Berman B.P."/>
            <person name="Bhandari D."/>
            <person name="Bolshakov S."/>
            <person name="Borkova D."/>
            <person name="Botchan M.R."/>
            <person name="Bouck J."/>
            <person name="Brokstein P."/>
            <person name="Brottier P."/>
            <person name="Burtis K.C."/>
            <person name="Busam D.A."/>
            <person name="Butler H."/>
            <person name="Cadieu E."/>
            <person name="Center A."/>
            <person name="Chandra I."/>
            <person name="Cherry J.M."/>
            <person name="Cawley S."/>
            <person name="Dahlke C."/>
            <person name="Davenport L.B."/>
            <person name="Davies P."/>
            <person name="de Pablos B."/>
            <person name="Delcher A."/>
            <person name="Deng Z."/>
            <person name="Mays A.D."/>
            <person name="Dew I."/>
            <person name="Dietz S.M."/>
            <person name="Dodson K."/>
            <person name="Doup L.E."/>
            <person name="Downes M."/>
            <person name="Dugan-Rocha S."/>
            <person name="Dunkov B.C."/>
            <person name="Dunn P."/>
            <person name="Durbin K.J."/>
            <person name="Evangelista C.C."/>
            <person name="Ferraz C."/>
            <person name="Ferriera S."/>
            <person name="Fleischmann W."/>
            <person name="Fosler C."/>
            <person name="Gabrielian A.E."/>
            <person name="Garg N.S."/>
            <person name="Gelbart W.M."/>
            <person name="Glasser K."/>
            <person name="Glodek A."/>
            <person name="Gong F."/>
            <person name="Gorrell J.H."/>
            <person name="Gu Z."/>
            <person name="Guan P."/>
            <person name="Harris M."/>
            <person name="Harris N.L."/>
            <person name="Harvey D.A."/>
            <person name="Heiman T.J."/>
            <person name="Hernandez J.R."/>
            <person name="Houck J."/>
            <person name="Hostin D."/>
            <person name="Houston K.A."/>
            <person name="Howland T.J."/>
            <person name="Wei M.-H."/>
            <person name="Ibegwam C."/>
            <person name="Jalali M."/>
            <person name="Kalush F."/>
            <person name="Karpen G.H."/>
            <person name="Ke Z."/>
            <person name="Kennison J.A."/>
            <person name="Ketchum K.A."/>
            <person name="Kimmel B.E."/>
            <person name="Kodira C.D."/>
            <person name="Kraft C.L."/>
            <person name="Kravitz S."/>
            <person name="Kulp D."/>
            <person name="Lai Z."/>
            <person name="Lasko P."/>
            <person name="Lei Y."/>
            <person name="Levitsky A.A."/>
            <person name="Li J.H."/>
            <person name="Li Z."/>
            <person name="Liang Y."/>
            <person name="Lin X."/>
            <person name="Liu X."/>
            <person name="Mattei B."/>
            <person name="McIntosh T.C."/>
            <person name="McLeod M.P."/>
            <person name="McPherson D."/>
            <person name="Merkulov G."/>
            <person name="Milshina N.V."/>
            <person name="Mobarry C."/>
            <person name="Morris J."/>
            <person name="Moshrefi A."/>
            <person name="Mount S.M."/>
            <person name="Moy M."/>
            <person name="Murphy B."/>
            <person name="Murphy L."/>
            <person name="Muzny D.M."/>
            <person name="Nelson D.L."/>
            <person name="Nelson D.R."/>
            <person name="Nelson K.A."/>
            <person name="Nixon K."/>
            <person name="Nusskern D.R."/>
            <person name="Pacleb J.M."/>
            <person name="Palazzolo M."/>
            <person name="Pittman G.S."/>
            <person name="Pan S."/>
            <person name="Pollard J."/>
            <person name="Puri V."/>
            <person name="Reese M.G."/>
            <person name="Reinert K."/>
            <person name="Remington K."/>
            <person name="Saunders R.D.C."/>
            <person name="Scheeler F."/>
            <person name="Shen H."/>
            <person name="Shue B.C."/>
            <person name="Siden-Kiamos I."/>
            <person name="Simpson M."/>
            <person name="Skupski M.P."/>
            <person name="Smith T.J."/>
            <person name="Spier E."/>
            <person name="Spradling A.C."/>
            <person name="Stapleton M."/>
            <person name="Strong R."/>
            <person name="Sun E."/>
            <person name="Svirskas R."/>
            <person name="Tector C."/>
            <person name="Turner R."/>
            <person name="Venter E."/>
            <person name="Wang A.H."/>
            <person name="Wang X."/>
            <person name="Wang Z.-Y."/>
            <person name="Wassarman D.A."/>
            <person name="Weinstock G.M."/>
            <person name="Weissenbach J."/>
            <person name="Williams S.M."/>
            <person name="Woodage T."/>
            <person name="Worley K.C."/>
            <person name="Wu D."/>
            <person name="Yang S."/>
            <person name="Yao Q.A."/>
            <person name="Ye J."/>
            <person name="Yeh R.-F."/>
            <person name="Zaveri J.S."/>
            <person name="Zhan M."/>
            <person name="Zhang G."/>
            <person name="Zhao Q."/>
            <person name="Zheng L."/>
            <person name="Zheng X.H."/>
            <person name="Zhong F.N."/>
            <person name="Zhong W."/>
            <person name="Zhou X."/>
            <person name="Zhu S.C."/>
            <person name="Zhu X."/>
            <person name="Smith H.O."/>
            <person name="Gibbs R.A."/>
            <person name="Myers E.W."/>
            <person name="Rubin G.M."/>
            <person name="Venter J.C."/>
        </authorList>
    </citation>
    <scope>NUCLEOTIDE SEQUENCE [LARGE SCALE GENOMIC DNA]</scope>
    <source>
        <strain>Berkeley</strain>
    </source>
</reference>
<reference key="3">
    <citation type="journal article" date="2002" name="Genome Biol.">
        <title>Annotation of the Drosophila melanogaster euchromatic genome: a systematic review.</title>
        <authorList>
            <person name="Misra S."/>
            <person name="Crosby M.A."/>
            <person name="Mungall C.J."/>
            <person name="Matthews B.B."/>
            <person name="Campbell K.S."/>
            <person name="Hradecky P."/>
            <person name="Huang Y."/>
            <person name="Kaminker J.S."/>
            <person name="Millburn G.H."/>
            <person name="Prochnik S.E."/>
            <person name="Smith C.D."/>
            <person name="Tupy J.L."/>
            <person name="Whitfield E.J."/>
            <person name="Bayraktaroglu L."/>
            <person name="Berman B.P."/>
            <person name="Bettencourt B.R."/>
            <person name="Celniker S.E."/>
            <person name="de Grey A.D.N.J."/>
            <person name="Drysdale R.A."/>
            <person name="Harris N.L."/>
            <person name="Richter J."/>
            <person name="Russo S."/>
            <person name="Schroeder A.J."/>
            <person name="Shu S.Q."/>
            <person name="Stapleton M."/>
            <person name="Yamada C."/>
            <person name="Ashburner M."/>
            <person name="Gelbart W.M."/>
            <person name="Rubin G.M."/>
            <person name="Lewis S.E."/>
        </authorList>
    </citation>
    <scope>GENOME REANNOTATION</scope>
    <source>
        <strain>Berkeley</strain>
    </source>
</reference>
<reference key="4">
    <citation type="journal article" date="2002" name="Genome Biol.">
        <title>A Drosophila full-length cDNA resource.</title>
        <authorList>
            <person name="Stapleton M."/>
            <person name="Carlson J.W."/>
            <person name="Brokstein P."/>
            <person name="Yu C."/>
            <person name="Champe M."/>
            <person name="George R.A."/>
            <person name="Guarin H."/>
            <person name="Kronmiller B."/>
            <person name="Pacleb J.M."/>
            <person name="Park S."/>
            <person name="Wan K.H."/>
            <person name="Rubin G.M."/>
            <person name="Celniker S.E."/>
        </authorList>
    </citation>
    <scope>NUCLEOTIDE SEQUENCE [LARGE SCALE MRNA]</scope>
    <source>
        <strain>Berkeley</strain>
        <tissue>Embryo</tissue>
    </source>
</reference>
<reference key="5">
    <citation type="submission" date="2008-09" db="EMBL/GenBank/DDBJ databases">
        <authorList>
            <person name="Carlson J.W."/>
            <person name="Booth B."/>
            <person name="Frise E."/>
            <person name="Park S."/>
            <person name="Wan K.H."/>
            <person name="Yu C."/>
            <person name="Celniker S.E."/>
        </authorList>
    </citation>
    <scope>NUCLEOTIDE SEQUENCE [LARGE SCALE MRNA]</scope>
    <source>
        <strain>Berkeley</strain>
    </source>
</reference>
<reference key="6">
    <citation type="journal article" date="2008" name="J. Proteome Res.">
        <title>Phosphoproteome analysis of Drosophila melanogaster embryos.</title>
        <authorList>
            <person name="Zhai B."/>
            <person name="Villen J."/>
            <person name="Beausoleil S.A."/>
            <person name="Mintseris J."/>
            <person name="Gygi S.P."/>
        </authorList>
    </citation>
    <scope>PHOSPHORYLATION [LARGE SCALE ANALYSIS] AT SER-85; SER-110; SER-114; SER-117; SER-121; SER-183 AND SER-1117</scope>
    <scope>IDENTIFICATION BY MASS SPECTROMETRY</scope>
    <source>
        <tissue>Embryo</tissue>
    </source>
</reference>
<dbReference type="EMBL" id="J02932">
    <property type="status" value="NOT_ANNOTATED_CDS"/>
    <property type="molecule type" value="mRNA"/>
</dbReference>
<dbReference type="EMBL" id="AE014296">
    <property type="protein sequence ID" value="AAF49788.1"/>
    <property type="molecule type" value="Genomic_DNA"/>
</dbReference>
<dbReference type="EMBL" id="AY118377">
    <property type="protein sequence ID" value="AAM48406.1"/>
    <property type="molecule type" value="mRNA"/>
</dbReference>
<dbReference type="EMBL" id="BT044559">
    <property type="protein sequence ID" value="ACI15754.1"/>
    <property type="molecule type" value="mRNA"/>
</dbReference>
<dbReference type="PIR" id="A28313">
    <property type="entry name" value="A28313"/>
</dbReference>
<dbReference type="RefSeq" id="NP_524061.1">
    <property type="nucleotide sequence ID" value="NM_079337.3"/>
</dbReference>
<dbReference type="SMR" id="P13496"/>
<dbReference type="BioGRID" id="64877">
    <property type="interactions" value="56"/>
</dbReference>
<dbReference type="ComplexPortal" id="CPX-2434">
    <property type="entry name" value="Dynactin complex"/>
</dbReference>
<dbReference type="DIP" id="DIP-21099N"/>
<dbReference type="FunCoup" id="P13496">
    <property type="interactions" value="1678"/>
</dbReference>
<dbReference type="IntAct" id="P13496">
    <property type="interactions" value="14"/>
</dbReference>
<dbReference type="STRING" id="7227.FBpp0075498"/>
<dbReference type="GlyGen" id="P13496">
    <property type="glycosylation" value="1 site"/>
</dbReference>
<dbReference type="iPTMnet" id="P13496"/>
<dbReference type="PaxDb" id="7227-FBpp0075498"/>
<dbReference type="DNASU" id="39536"/>
<dbReference type="EnsemblMetazoa" id="FBtr0075756">
    <property type="protein sequence ID" value="FBpp0075498"/>
    <property type="gene ID" value="FBgn0001108"/>
</dbReference>
<dbReference type="GeneID" id="39536"/>
<dbReference type="KEGG" id="dme:Dmel_CG9206"/>
<dbReference type="UCSC" id="CG9206-RA">
    <property type="organism name" value="d. melanogaster"/>
</dbReference>
<dbReference type="AGR" id="FB:FBgn0001108"/>
<dbReference type="CTD" id="39536"/>
<dbReference type="FlyBase" id="FBgn0001108">
    <property type="gene designation" value="DCTN1-p150"/>
</dbReference>
<dbReference type="VEuPathDB" id="VectorBase:FBgn0001108"/>
<dbReference type="eggNOG" id="KOG0971">
    <property type="taxonomic scope" value="Eukaryota"/>
</dbReference>
<dbReference type="GeneTree" id="ENSGT00940000155378"/>
<dbReference type="HOGENOM" id="CLU_002523_0_1_1"/>
<dbReference type="InParanoid" id="P13496"/>
<dbReference type="OMA" id="LFEMEPV"/>
<dbReference type="OrthoDB" id="2130750at2759"/>
<dbReference type="PhylomeDB" id="P13496"/>
<dbReference type="Reactome" id="R-DME-3371497">
    <property type="pathway name" value="HSP90 chaperone cycle for steroid hormone receptors (SHR) in the presence of ligand"/>
</dbReference>
<dbReference type="Reactome" id="R-DME-6807878">
    <property type="pathway name" value="COPI-mediated anterograde transport"/>
</dbReference>
<dbReference type="Reactome" id="R-DME-6811436">
    <property type="pathway name" value="COPI-independent Golgi-to-ER retrograde traffic"/>
</dbReference>
<dbReference type="SignaLink" id="P13496"/>
<dbReference type="BioGRID-ORCS" id="39536">
    <property type="hits" value="0 hits in 1 CRISPR screen"/>
</dbReference>
<dbReference type="CD-CODE" id="2838EF58">
    <property type="entry name" value="Centrosome"/>
</dbReference>
<dbReference type="ChiTaRS" id="DCTN1-p150">
    <property type="organism name" value="fly"/>
</dbReference>
<dbReference type="GenomeRNAi" id="39536"/>
<dbReference type="PRO" id="PR:P13496"/>
<dbReference type="Proteomes" id="UP000000803">
    <property type="component" value="Chromosome 3L"/>
</dbReference>
<dbReference type="Bgee" id="FBgn0001108">
    <property type="expression patterns" value="Expressed in ocellus retinula cell (Drosophila) in insect head and 147 other cell types or tissues"/>
</dbReference>
<dbReference type="GO" id="GO:0005818">
    <property type="term" value="C:aster"/>
    <property type="evidence" value="ECO:0000314"/>
    <property type="project" value="FlyBase"/>
</dbReference>
<dbReference type="GO" id="GO:0030424">
    <property type="term" value="C:axon"/>
    <property type="evidence" value="ECO:0000318"/>
    <property type="project" value="GO_Central"/>
</dbReference>
<dbReference type="GO" id="GO:1904115">
    <property type="term" value="C:axon cytoplasm"/>
    <property type="evidence" value="ECO:0000314"/>
    <property type="project" value="FlyBase"/>
</dbReference>
<dbReference type="GO" id="GO:0005813">
    <property type="term" value="C:centrosome"/>
    <property type="evidence" value="ECO:0000314"/>
    <property type="project" value="FlyBase"/>
</dbReference>
<dbReference type="GO" id="GO:0005737">
    <property type="term" value="C:cytoplasm"/>
    <property type="evidence" value="ECO:0000314"/>
    <property type="project" value="FlyBase"/>
</dbReference>
<dbReference type="GO" id="GO:0005869">
    <property type="term" value="C:dynactin complex"/>
    <property type="evidence" value="ECO:0000250"/>
    <property type="project" value="FlyBase"/>
</dbReference>
<dbReference type="GO" id="GO:0030286">
    <property type="term" value="C:dynein complex"/>
    <property type="evidence" value="ECO:0007669"/>
    <property type="project" value="UniProtKB-KW"/>
</dbReference>
<dbReference type="GO" id="GO:0000776">
    <property type="term" value="C:kinetochore"/>
    <property type="evidence" value="ECO:0000314"/>
    <property type="project" value="FlyBase"/>
</dbReference>
<dbReference type="GO" id="GO:0005875">
    <property type="term" value="C:microtubule associated complex"/>
    <property type="evidence" value="ECO:0000318"/>
    <property type="project" value="GO_Central"/>
</dbReference>
<dbReference type="GO" id="GO:0030496">
    <property type="term" value="C:midbody"/>
    <property type="evidence" value="ECO:0000314"/>
    <property type="project" value="FlyBase"/>
</dbReference>
<dbReference type="GO" id="GO:0061803">
    <property type="term" value="C:posterior cell cortex"/>
    <property type="evidence" value="ECO:0000314"/>
    <property type="project" value="FlyBase"/>
</dbReference>
<dbReference type="GO" id="GO:0005876">
    <property type="term" value="C:spindle microtubule"/>
    <property type="evidence" value="ECO:0000314"/>
    <property type="project" value="FlyBase"/>
</dbReference>
<dbReference type="GO" id="GO:0000922">
    <property type="term" value="C:spindle pole"/>
    <property type="evidence" value="ECO:0000318"/>
    <property type="project" value="GO_Central"/>
</dbReference>
<dbReference type="GO" id="GO:0061176">
    <property type="term" value="C:type Ib terminal bouton"/>
    <property type="evidence" value="ECO:0000314"/>
    <property type="project" value="FlyBase"/>
</dbReference>
<dbReference type="GO" id="GO:0070840">
    <property type="term" value="F:dynein complex binding"/>
    <property type="evidence" value="ECO:0000314"/>
    <property type="project" value="FlyBase"/>
</dbReference>
<dbReference type="GO" id="GO:0045505">
    <property type="term" value="F:dynein intermediate chain binding"/>
    <property type="evidence" value="ECO:0000353"/>
    <property type="project" value="FlyBase"/>
</dbReference>
<dbReference type="GO" id="GO:0008017">
    <property type="term" value="F:microtubule binding"/>
    <property type="evidence" value="ECO:0000314"/>
    <property type="project" value="FlyBase"/>
</dbReference>
<dbReference type="GO" id="GO:0048675">
    <property type="term" value="P:axon extension"/>
    <property type="evidence" value="ECO:0000316"/>
    <property type="project" value="FlyBase"/>
</dbReference>
<dbReference type="GO" id="GO:0019896">
    <property type="term" value="P:axonal transport of mitochondrion"/>
    <property type="evidence" value="ECO:0000315"/>
    <property type="project" value="FlyBase"/>
</dbReference>
<dbReference type="GO" id="GO:0001709">
    <property type="term" value="P:cell fate determination"/>
    <property type="evidence" value="ECO:0000315"/>
    <property type="project" value="FlyBase"/>
</dbReference>
<dbReference type="GO" id="GO:0007349">
    <property type="term" value="P:cellularization"/>
    <property type="evidence" value="ECO:0000316"/>
    <property type="project" value="FlyBase"/>
</dbReference>
<dbReference type="GO" id="GO:0051642">
    <property type="term" value="P:centrosome localization"/>
    <property type="evidence" value="ECO:0000315"/>
    <property type="project" value="FlyBase"/>
</dbReference>
<dbReference type="GO" id="GO:0051299">
    <property type="term" value="P:centrosome separation"/>
    <property type="evidence" value="ECO:0000315"/>
    <property type="project" value="FlyBase"/>
</dbReference>
<dbReference type="GO" id="GO:0001751">
    <property type="term" value="P:compound eye photoreceptor cell differentiation"/>
    <property type="evidence" value="ECO:0000315"/>
    <property type="project" value="FlyBase"/>
</dbReference>
<dbReference type="GO" id="GO:0042051">
    <property type="term" value="P:compound eye photoreceptor development"/>
    <property type="evidence" value="ECO:0000315"/>
    <property type="project" value="FlyBase"/>
</dbReference>
<dbReference type="GO" id="GO:0045198">
    <property type="term" value="P:establishment of epithelial cell apical/basal polarity"/>
    <property type="evidence" value="ECO:0000314"/>
    <property type="project" value="FlyBase"/>
</dbReference>
<dbReference type="GO" id="GO:0000132">
    <property type="term" value="P:establishment of mitotic spindle orientation"/>
    <property type="evidence" value="ECO:0000318"/>
    <property type="project" value="GO_Central"/>
</dbReference>
<dbReference type="GO" id="GO:0061670">
    <property type="term" value="P:evoked neurotransmitter secretion"/>
    <property type="evidence" value="ECO:0000315"/>
    <property type="project" value="FlyBase"/>
</dbReference>
<dbReference type="GO" id="GO:0001754">
    <property type="term" value="P:eye photoreceptor cell differentiation"/>
    <property type="evidence" value="ECO:0000315"/>
    <property type="project" value="FlyBase"/>
</dbReference>
<dbReference type="GO" id="GO:0006886">
    <property type="term" value="P:intracellular protein transport"/>
    <property type="evidence" value="ECO:0000315"/>
    <property type="project" value="FlyBase"/>
</dbReference>
<dbReference type="GO" id="GO:0051383">
    <property type="term" value="P:kinetochore organization"/>
    <property type="evidence" value="ECO:0000315"/>
    <property type="project" value="FlyBase"/>
</dbReference>
<dbReference type="GO" id="GO:0035149">
    <property type="term" value="P:lumen formation, open tracheal system"/>
    <property type="evidence" value="ECO:0000315"/>
    <property type="project" value="UniProtKB"/>
</dbReference>
<dbReference type="GO" id="GO:0035011">
    <property type="term" value="P:melanotic encapsulation of foreign target"/>
    <property type="evidence" value="ECO:0000315"/>
    <property type="project" value="FlyBase"/>
</dbReference>
<dbReference type="GO" id="GO:0000278">
    <property type="term" value="P:mitotic cell cycle"/>
    <property type="evidence" value="ECO:0007001"/>
    <property type="project" value="FlyBase"/>
</dbReference>
<dbReference type="GO" id="GO:0051256">
    <property type="term" value="P:mitotic spindle midzone assembly"/>
    <property type="evidence" value="ECO:0000315"/>
    <property type="project" value="FlyBase"/>
</dbReference>
<dbReference type="GO" id="GO:0051028">
    <property type="term" value="P:mRNA transport"/>
    <property type="evidence" value="ECO:0000315"/>
    <property type="project" value="FlyBase"/>
</dbReference>
<dbReference type="GO" id="GO:0007097">
    <property type="term" value="P:nuclear migration"/>
    <property type="evidence" value="ECO:0000318"/>
    <property type="project" value="GO_Central"/>
</dbReference>
<dbReference type="GO" id="GO:0050772">
    <property type="term" value="P:positive regulation of axonogenesis"/>
    <property type="evidence" value="ECO:0000315"/>
    <property type="project" value="FlyBase"/>
</dbReference>
<dbReference type="GO" id="GO:0034501">
    <property type="term" value="P:protein localization to kinetochore"/>
    <property type="evidence" value="ECO:0000315"/>
    <property type="project" value="FlyBase"/>
</dbReference>
<dbReference type="GO" id="GO:0008090">
    <property type="term" value="P:retrograde axonal transport"/>
    <property type="evidence" value="ECO:0000315"/>
    <property type="project" value="FlyBase"/>
</dbReference>
<dbReference type="GO" id="GO:1990049">
    <property type="term" value="P:retrograde neuronal dense core vesicle transport"/>
    <property type="evidence" value="ECO:0000315"/>
    <property type="project" value="FlyBase"/>
</dbReference>
<dbReference type="GO" id="GO:0048491">
    <property type="term" value="P:retrograde synaptic vesicle transport"/>
    <property type="evidence" value="ECO:0000314"/>
    <property type="project" value="FlyBase"/>
</dbReference>
<dbReference type="GO" id="GO:0042052">
    <property type="term" value="P:rhabdomere development"/>
    <property type="evidence" value="ECO:0000315"/>
    <property type="project" value="FlyBase"/>
</dbReference>
<dbReference type="GO" id="GO:0016330">
    <property type="term" value="P:second mitotic wave involved in compound eye morphogenesis"/>
    <property type="evidence" value="ECO:0000315"/>
    <property type="project" value="FlyBase"/>
</dbReference>
<dbReference type="GO" id="GO:0051225">
    <property type="term" value="P:spindle assembly"/>
    <property type="evidence" value="ECO:0000315"/>
    <property type="project" value="FlyBase"/>
</dbReference>
<dbReference type="GO" id="GO:0048489">
    <property type="term" value="P:synaptic vesicle transport"/>
    <property type="evidence" value="ECO:0000316"/>
    <property type="project" value="FlyBase"/>
</dbReference>
<dbReference type="FunFam" id="2.30.30.190:FF:000003">
    <property type="entry name" value="dynactin subunit 1 isoform X1"/>
    <property type="match status" value="1"/>
</dbReference>
<dbReference type="Gene3D" id="2.30.30.190">
    <property type="entry name" value="CAP Gly-rich-like domain"/>
    <property type="match status" value="1"/>
</dbReference>
<dbReference type="InterPro" id="IPR036859">
    <property type="entry name" value="CAP-Gly_dom_sf"/>
</dbReference>
<dbReference type="InterPro" id="IPR000938">
    <property type="entry name" value="CAP-Gly_domain"/>
</dbReference>
<dbReference type="InterPro" id="IPR022157">
    <property type="entry name" value="Dynactin"/>
</dbReference>
<dbReference type="PANTHER" id="PTHR18916">
    <property type="entry name" value="DYNACTIN 1-RELATED MICROTUBULE-BINDING"/>
    <property type="match status" value="1"/>
</dbReference>
<dbReference type="Pfam" id="PF01302">
    <property type="entry name" value="CAP_GLY"/>
    <property type="match status" value="1"/>
</dbReference>
<dbReference type="Pfam" id="PF12455">
    <property type="entry name" value="Dynactin"/>
    <property type="match status" value="1"/>
</dbReference>
<dbReference type="SMART" id="SM01052">
    <property type="entry name" value="CAP_GLY"/>
    <property type="match status" value="1"/>
</dbReference>
<dbReference type="SUPFAM" id="SSF74924">
    <property type="entry name" value="Cap-Gly domain"/>
    <property type="match status" value="1"/>
</dbReference>
<dbReference type="PROSITE" id="PS00845">
    <property type="entry name" value="CAP_GLY_1"/>
    <property type="match status" value="1"/>
</dbReference>
<dbReference type="PROSITE" id="PS50245">
    <property type="entry name" value="CAP_GLY_2"/>
    <property type="match status" value="1"/>
</dbReference>
<protein>
    <recommendedName>
        <fullName>Dynactin subunit 1</fullName>
    </recommendedName>
    <alternativeName>
        <fullName>150 kDa dynein-associated polypeptide</fullName>
        <shortName>DAP-150</shortName>
        <shortName>DP-150</shortName>
    </alternativeName>
    <alternativeName>
        <fullName evidence="9">Dynactin 1 subunit p150</fullName>
    </alternativeName>
    <alternativeName>
        <fullName evidence="7">Protein glued</fullName>
    </alternativeName>
</protein>
<evidence type="ECO:0000250" key="1">
    <source>
        <dbReference type="UniProtKB" id="A0A287B8J2"/>
    </source>
</evidence>
<evidence type="ECO:0000250" key="2">
    <source>
        <dbReference type="UniProtKB" id="Q14203"/>
    </source>
</evidence>
<evidence type="ECO:0000255" key="3"/>
<evidence type="ECO:0000255" key="4">
    <source>
        <dbReference type="PROSITE-ProRule" id="PRU00045"/>
    </source>
</evidence>
<evidence type="ECO:0000256" key="5">
    <source>
        <dbReference type="SAM" id="MobiDB-lite"/>
    </source>
</evidence>
<evidence type="ECO:0000269" key="6">
    <source>
    </source>
</evidence>
<evidence type="ECO:0000303" key="7">
    <source>
    </source>
</evidence>
<evidence type="ECO:0000305" key="8"/>
<evidence type="ECO:0000312" key="9">
    <source>
        <dbReference type="FlyBase" id="FBgn0001108"/>
    </source>
</evidence>
<feature type="chain" id="PRO_0000083523" description="Dynactin subunit 1">
    <location>
        <begin position="1"/>
        <end position="1265"/>
    </location>
</feature>
<feature type="domain" description="CAP-Gly" evidence="4">
    <location>
        <begin position="27"/>
        <end position="69"/>
    </location>
</feature>
<feature type="region of interest" description="Disordered" evidence="5">
    <location>
        <begin position="81"/>
        <end position="179"/>
    </location>
</feature>
<feature type="region of interest" description="Disordered" evidence="5">
    <location>
        <begin position="1082"/>
        <end position="1106"/>
    </location>
</feature>
<feature type="coiled-coil region" evidence="3">
    <location>
        <begin position="213"/>
        <end position="570"/>
    </location>
</feature>
<feature type="coiled-coil region" evidence="3">
    <location>
        <begin position="812"/>
        <end position="836"/>
    </location>
</feature>
<feature type="coiled-coil region" evidence="3">
    <location>
        <begin position="967"/>
        <end position="1084"/>
    </location>
</feature>
<feature type="coiled-coil region" evidence="3">
    <location>
        <begin position="1128"/>
        <end position="1160"/>
    </location>
</feature>
<feature type="compositionally biased region" description="Low complexity" evidence="5">
    <location>
        <begin position="103"/>
        <end position="138"/>
    </location>
</feature>
<feature type="compositionally biased region" description="Low complexity" evidence="5">
    <location>
        <begin position="161"/>
        <end position="177"/>
    </location>
</feature>
<feature type="modified residue" description="Phosphoserine" evidence="6">
    <location>
        <position position="85"/>
    </location>
</feature>
<feature type="modified residue" description="Phosphoserine" evidence="6">
    <location>
        <position position="110"/>
    </location>
</feature>
<feature type="modified residue" description="Phosphoserine" evidence="6">
    <location>
        <position position="114"/>
    </location>
</feature>
<feature type="modified residue" description="Phosphoserine" evidence="6">
    <location>
        <position position="117"/>
    </location>
</feature>
<feature type="modified residue" description="Phosphoserine" evidence="6">
    <location>
        <position position="121"/>
    </location>
</feature>
<feature type="modified residue" description="Phosphoserine" evidence="6">
    <location>
        <position position="183"/>
    </location>
</feature>
<feature type="modified residue" description="Phosphoserine" evidence="6">
    <location>
        <position position="1117"/>
    </location>
</feature>
<feature type="sequence conflict" description="In Ref. 1; J02932." evidence="8" ref="1">
    <original>D</original>
    <variation>A</variation>
    <location>
        <position position="708"/>
    </location>
</feature>
<feature type="sequence conflict" description="In Ref. 4; AAM48406." evidence="8" ref="4">
    <original>S</original>
    <variation>P</variation>
    <location>
        <position position="865"/>
    </location>
</feature>
<feature type="sequence conflict" description="In Ref. 1; J02932." evidence="8" ref="1">
    <original>L</original>
    <variation>V</variation>
    <location>
        <position position="875"/>
    </location>
</feature>
<feature type="sequence conflict" description="In Ref. 1; J02932." evidence="8" ref="1">
    <original>A</original>
    <variation>R</variation>
    <location>
        <position position="888"/>
    </location>
</feature>
<feature type="sequence conflict" description="In Ref. 1; J02932." evidence="8" ref="1">
    <original>S</original>
    <variation>C</variation>
    <location>
        <position position="1043"/>
    </location>
</feature>
<organism>
    <name type="scientific">Drosophila melanogaster</name>
    <name type="common">Fruit fly</name>
    <dbReference type="NCBI Taxonomy" id="7227"/>
    <lineage>
        <taxon>Eukaryota</taxon>
        <taxon>Metazoa</taxon>
        <taxon>Ecdysozoa</taxon>
        <taxon>Arthropoda</taxon>
        <taxon>Hexapoda</taxon>
        <taxon>Insecta</taxon>
        <taxon>Pterygota</taxon>
        <taxon>Neoptera</taxon>
        <taxon>Endopterygota</taxon>
        <taxon>Diptera</taxon>
        <taxon>Brachycera</taxon>
        <taxon>Muscomorpha</taxon>
        <taxon>Ephydroidea</taxon>
        <taxon>Drosophilidae</taxon>
        <taxon>Drosophila</taxon>
        <taxon>Sophophora</taxon>
    </lineage>
</organism>
<keyword id="KW-0175">Coiled coil</keyword>
<keyword id="KW-0963">Cytoplasm</keyword>
<keyword id="KW-0206">Cytoskeleton</keyword>
<keyword id="KW-0243">Dynein</keyword>
<keyword id="KW-0493">Microtubule</keyword>
<keyword id="KW-0597">Phosphoprotein</keyword>
<keyword id="KW-1185">Reference proteome</keyword>
<sequence>MSEKNLKVGARVELTGKDLLGTVAYVGMTSFAVGKWVGVVLDEPKGKNSGSIKGQQYFQCDENCGMFVRPTQLRLLEAAPGSRRSIEDVSGATPTAAQPTKARLSSSRTSLSSSRQSLLGSRTQLTTSLSERTASSSSIGPRKSLAPQNSKDKESPSTSLAEGAPAASGGNGAASHASSKRASFVETGFLEILKPQFTPSQPLRSPSFTMPSNSGAEDKVALLEAQKTSAELQAQLADLTEKLETLKQRRNEDKERLREFDKMKIQFEQLQEFRTKIMGAQASLQKELLRAKQEAKDAIEAKEQHAQEMADLADNVEMITLDKEMAEEKADTLQLELESSKERIEELEVDLELLRSEMQNKAESAIGNISGGGDSPGLSTYEFKQLEQQNIRLKETLVRLRDLSAHDKHDIQKLSKELEMKRSEVTELERTKEKLSAKIDELEAIVADLQEQVDAALGAEEMVEQLAEKKMELEDKVKLLEEEIAQLEALEEVHEQLVESNHELELDLREELDLANGAKKEVLRERDAAIETIYDRDQTIVKFRELVQKLNDQLTELRDRNSSNEKESLQDPSLKMVTETIDYKQMFAESKAYTRAIDVQLRQIELSQANEHVQMLTAFMPESFMSRGGDHDSILVILLISRIVFKCDIVVSQTRERFPPVDAITREAVTQGHAVQQYAFKCRLLHYVHSLQCALHQILYGLNSCQPDTLLRAGSSLPEMVAQEKIVDGIIELLKSNQLDENSTTDNIEKCVAFFNAMNSVLLAGEQLLNEIQMIRDCVASLGAACESILSDTAIAKVIIQEAGATSDSVLLIQFLNENMESVRQQVKLIKRRLPSDQHVIKSGLSQHKVEAMRGLAQNISRIMSAMHQATKQSLAAIVSTIESDNAAEHTLPQEKYWALLTASCERIYEQDDRGPTQNFKTLLAQANSDLQLIAQHLLDKEYDIISAANNASNQQKSGAHSTPITQRAQLIKKQLEQKNVLAATLENREADVKQLKVAAKMKQNELSEMQIRKDLAEKKLSVLQNEYEHAVDKWKQKYEETSLQLQLKEKEFEETMDHLQSDIDALESEKSDLRDKLKLNSTTGKVQPGSESHSPHNISLSGNTSTAPGISNVSYSAPAGTAPVVAEEVELLKNAFNQERNQRLRLQAQDMRAKLSQFEPLHVPQPQDQRITALESELTRMKHAWVLSLLQVRSQDSVNSGTRIDAVALQRRNQPVPLKGEISSKASQLASDILTEYLQRKPHRATHGQFASFPTVDVKRVLQI</sequence>
<accession>P13496</accession>
<accession>B5X0J0</accession>
<accession>Q8MT52</accession>
<accession>Q9VUA1</accession>
<name>DCTN1_DROME</name>
<gene>
    <name evidence="9" type="primary">DCTN1-p150</name>
    <name evidence="9" type="synonym">Gl</name>
    <name evidence="9" type="ORF">CG9206</name>
</gene>
<proteinExistence type="evidence at protein level"/>